<accession>O84590</accession>
<evidence type="ECO:0000255" key="1">
    <source>
        <dbReference type="HAMAP-Rule" id="MF_00204"/>
    </source>
</evidence>
<proteinExistence type="inferred from homology"/>
<sequence length="668" mass="75867">MGGGVLKQQFVLHAPFLPCGDQPEAIRRLSQGITDGVPAQVLLGTTGSGKTFTMANVIANVNVPTLVLAHNKTLAAQLYQEFKAFFPENAVEYFISYYDYYQPEAYIARSDTYIEKSLLINDEIDKLRLSATRSILERRDTLIVSSISCIYGIGSPDNYSSMALTLEVGKEYPRSQLSSQLVRMHYQASSTPQRSAFRERGSVIDIFLAYESDLAVRLEFMNDTLISIEYVDPLTMIPSHTTSSITLYPGSHYVTPEAVREQAIRTIREELEQRMLFFEGRPVEQERLFQRTTHDIEMIKEIGFCKGIENYSRHFTGAAPGEPPTCLLDYFPDDFLLIIDESHQTLPQLRAMYRGDQSRKQSLVEYGFRLPSAFDNRPLTYEEARRYFHRVIYVSATPGDLEIQESRGHIIEQIIRPTGIPDPLPEIRPAKGQIDDLLEEIRQRLRKDQEKILVISVTKKLAEDIAAFLAELGIAATYLHSGIETAERTQILTDLRLGNIDVLIGVNLLREGIDLPEVSLVAILDADKEGFLRSSASLIQFCGRAARNIHGKVICYADRITPSMDHMLKETERRRKIQLDYNQQHKITPQPIIKPILANPITKEAGQEETRLKMQSSKELEASIKTYEEAMYQAAQEFQFDEAAKYRDLMNAAKKQLLFQKGEEENGD</sequence>
<gene>
    <name evidence="1" type="primary">uvrB</name>
    <name type="ordered locus">CT_586</name>
</gene>
<feature type="chain" id="PRO_0000138387" description="UvrABC system protein B">
    <location>
        <begin position="1"/>
        <end position="668"/>
    </location>
</feature>
<feature type="domain" description="Helicase ATP-binding" evidence="1">
    <location>
        <begin position="31"/>
        <end position="416"/>
    </location>
</feature>
<feature type="domain" description="Helicase C-terminal" evidence="1">
    <location>
        <begin position="433"/>
        <end position="596"/>
    </location>
</feature>
<feature type="domain" description="UVR" evidence="1">
    <location>
        <begin position="621"/>
        <end position="656"/>
    </location>
</feature>
<feature type="short sequence motif" description="Beta-hairpin">
    <location>
        <begin position="97"/>
        <end position="120"/>
    </location>
</feature>
<feature type="binding site" evidence="1">
    <location>
        <begin position="44"/>
        <end position="51"/>
    </location>
    <ligand>
        <name>ATP</name>
        <dbReference type="ChEBI" id="CHEBI:30616"/>
    </ligand>
</feature>
<dbReference type="EMBL" id="AE001273">
    <property type="protein sequence ID" value="AAC68188.1"/>
    <property type="molecule type" value="Genomic_DNA"/>
</dbReference>
<dbReference type="PIR" id="C71496">
    <property type="entry name" value="C71496"/>
</dbReference>
<dbReference type="RefSeq" id="NP_220101.1">
    <property type="nucleotide sequence ID" value="NC_000117.1"/>
</dbReference>
<dbReference type="RefSeq" id="WP_010725260.1">
    <property type="nucleotide sequence ID" value="NC_000117.1"/>
</dbReference>
<dbReference type="SMR" id="O84590"/>
<dbReference type="FunCoup" id="O84590">
    <property type="interactions" value="163"/>
</dbReference>
<dbReference type="STRING" id="272561.CT_586"/>
<dbReference type="EnsemblBacteria" id="AAC68188">
    <property type="protein sequence ID" value="AAC68188"/>
    <property type="gene ID" value="CT_586"/>
</dbReference>
<dbReference type="GeneID" id="884370"/>
<dbReference type="KEGG" id="ctr:CT_586"/>
<dbReference type="PATRIC" id="fig|272561.5.peg.638"/>
<dbReference type="HOGENOM" id="CLU_009621_2_1_0"/>
<dbReference type="InParanoid" id="O84590"/>
<dbReference type="OrthoDB" id="9806651at2"/>
<dbReference type="Proteomes" id="UP000000431">
    <property type="component" value="Chromosome"/>
</dbReference>
<dbReference type="GO" id="GO:0005737">
    <property type="term" value="C:cytoplasm"/>
    <property type="evidence" value="ECO:0007669"/>
    <property type="project" value="UniProtKB-SubCell"/>
</dbReference>
<dbReference type="GO" id="GO:0009380">
    <property type="term" value="C:excinuclease repair complex"/>
    <property type="evidence" value="ECO:0000318"/>
    <property type="project" value="GO_Central"/>
</dbReference>
<dbReference type="GO" id="GO:0005524">
    <property type="term" value="F:ATP binding"/>
    <property type="evidence" value="ECO:0007669"/>
    <property type="project" value="UniProtKB-UniRule"/>
</dbReference>
<dbReference type="GO" id="GO:0016887">
    <property type="term" value="F:ATP hydrolysis activity"/>
    <property type="evidence" value="ECO:0007669"/>
    <property type="project" value="InterPro"/>
</dbReference>
<dbReference type="GO" id="GO:0003677">
    <property type="term" value="F:DNA binding"/>
    <property type="evidence" value="ECO:0007669"/>
    <property type="project" value="UniProtKB-UniRule"/>
</dbReference>
<dbReference type="GO" id="GO:0009381">
    <property type="term" value="F:excinuclease ABC activity"/>
    <property type="evidence" value="ECO:0007669"/>
    <property type="project" value="UniProtKB-UniRule"/>
</dbReference>
<dbReference type="GO" id="GO:0000715">
    <property type="term" value="P:nucleotide-excision repair, DNA damage recognition"/>
    <property type="evidence" value="ECO:0000318"/>
    <property type="project" value="GO_Central"/>
</dbReference>
<dbReference type="GO" id="GO:0009432">
    <property type="term" value="P:SOS response"/>
    <property type="evidence" value="ECO:0007669"/>
    <property type="project" value="UniProtKB-UniRule"/>
</dbReference>
<dbReference type="CDD" id="cd17916">
    <property type="entry name" value="DEXHc_UvrB"/>
    <property type="match status" value="1"/>
</dbReference>
<dbReference type="CDD" id="cd18790">
    <property type="entry name" value="SF2_C_UvrB"/>
    <property type="match status" value="1"/>
</dbReference>
<dbReference type="Gene3D" id="3.40.50.300">
    <property type="entry name" value="P-loop containing nucleotide triphosphate hydrolases"/>
    <property type="match status" value="3"/>
</dbReference>
<dbReference type="Gene3D" id="4.10.860.10">
    <property type="entry name" value="UVR domain"/>
    <property type="match status" value="1"/>
</dbReference>
<dbReference type="HAMAP" id="MF_00204">
    <property type="entry name" value="UvrB"/>
    <property type="match status" value="1"/>
</dbReference>
<dbReference type="InterPro" id="IPR006935">
    <property type="entry name" value="Helicase/UvrB_N"/>
</dbReference>
<dbReference type="InterPro" id="IPR014001">
    <property type="entry name" value="Helicase_ATP-bd"/>
</dbReference>
<dbReference type="InterPro" id="IPR001650">
    <property type="entry name" value="Helicase_C-like"/>
</dbReference>
<dbReference type="InterPro" id="IPR027417">
    <property type="entry name" value="P-loop_NTPase"/>
</dbReference>
<dbReference type="InterPro" id="IPR001943">
    <property type="entry name" value="UVR_dom"/>
</dbReference>
<dbReference type="InterPro" id="IPR036876">
    <property type="entry name" value="UVR_dom_sf"/>
</dbReference>
<dbReference type="InterPro" id="IPR004807">
    <property type="entry name" value="UvrB"/>
</dbReference>
<dbReference type="InterPro" id="IPR041471">
    <property type="entry name" value="UvrB_inter"/>
</dbReference>
<dbReference type="InterPro" id="IPR024759">
    <property type="entry name" value="UvrB_YAD/RRR_dom"/>
</dbReference>
<dbReference type="NCBIfam" id="NF003673">
    <property type="entry name" value="PRK05298.1"/>
    <property type="match status" value="1"/>
</dbReference>
<dbReference type="NCBIfam" id="TIGR00631">
    <property type="entry name" value="uvrb"/>
    <property type="match status" value="1"/>
</dbReference>
<dbReference type="PANTHER" id="PTHR24029">
    <property type="entry name" value="UVRABC SYSTEM PROTEIN B"/>
    <property type="match status" value="1"/>
</dbReference>
<dbReference type="PANTHER" id="PTHR24029:SF0">
    <property type="entry name" value="UVRABC SYSTEM PROTEIN B"/>
    <property type="match status" value="1"/>
</dbReference>
<dbReference type="Pfam" id="PF00271">
    <property type="entry name" value="Helicase_C"/>
    <property type="match status" value="1"/>
</dbReference>
<dbReference type="Pfam" id="PF04851">
    <property type="entry name" value="ResIII"/>
    <property type="match status" value="1"/>
</dbReference>
<dbReference type="Pfam" id="PF02151">
    <property type="entry name" value="UVR"/>
    <property type="match status" value="1"/>
</dbReference>
<dbReference type="Pfam" id="PF12344">
    <property type="entry name" value="UvrB"/>
    <property type="match status" value="1"/>
</dbReference>
<dbReference type="Pfam" id="PF17757">
    <property type="entry name" value="UvrB_inter"/>
    <property type="match status" value="1"/>
</dbReference>
<dbReference type="SMART" id="SM00487">
    <property type="entry name" value="DEXDc"/>
    <property type="match status" value="1"/>
</dbReference>
<dbReference type="SMART" id="SM00490">
    <property type="entry name" value="HELICc"/>
    <property type="match status" value="1"/>
</dbReference>
<dbReference type="SUPFAM" id="SSF46600">
    <property type="entry name" value="C-terminal UvrC-binding domain of UvrB"/>
    <property type="match status" value="1"/>
</dbReference>
<dbReference type="SUPFAM" id="SSF52540">
    <property type="entry name" value="P-loop containing nucleoside triphosphate hydrolases"/>
    <property type="match status" value="2"/>
</dbReference>
<dbReference type="PROSITE" id="PS51192">
    <property type="entry name" value="HELICASE_ATP_BIND_1"/>
    <property type="match status" value="1"/>
</dbReference>
<dbReference type="PROSITE" id="PS51194">
    <property type="entry name" value="HELICASE_CTER"/>
    <property type="match status" value="1"/>
</dbReference>
<dbReference type="PROSITE" id="PS50151">
    <property type="entry name" value="UVR"/>
    <property type="match status" value="1"/>
</dbReference>
<organism>
    <name type="scientific">Chlamydia trachomatis serovar D (strain ATCC VR-885 / DSM 19411 / UW-3/Cx)</name>
    <dbReference type="NCBI Taxonomy" id="272561"/>
    <lineage>
        <taxon>Bacteria</taxon>
        <taxon>Pseudomonadati</taxon>
        <taxon>Chlamydiota</taxon>
        <taxon>Chlamydiia</taxon>
        <taxon>Chlamydiales</taxon>
        <taxon>Chlamydiaceae</taxon>
        <taxon>Chlamydia/Chlamydophila group</taxon>
        <taxon>Chlamydia</taxon>
    </lineage>
</organism>
<reference key="1">
    <citation type="journal article" date="1998" name="Science">
        <title>Genome sequence of an obligate intracellular pathogen of humans: Chlamydia trachomatis.</title>
        <authorList>
            <person name="Stephens R.S."/>
            <person name="Kalman S."/>
            <person name="Lammel C.J."/>
            <person name="Fan J."/>
            <person name="Marathe R."/>
            <person name="Aravind L."/>
            <person name="Mitchell W.P."/>
            <person name="Olinger L."/>
            <person name="Tatusov R.L."/>
            <person name="Zhao Q."/>
            <person name="Koonin E.V."/>
            <person name="Davis R.W."/>
        </authorList>
    </citation>
    <scope>NUCLEOTIDE SEQUENCE [LARGE SCALE GENOMIC DNA]</scope>
    <source>
        <strain>ATCC VR-885 / DSM 19411 / UW-3/Cx</strain>
    </source>
</reference>
<protein>
    <recommendedName>
        <fullName evidence="1">UvrABC system protein B</fullName>
        <shortName evidence="1">Protein UvrB</shortName>
    </recommendedName>
    <alternativeName>
        <fullName evidence="1">Excinuclease ABC subunit B</fullName>
    </alternativeName>
</protein>
<keyword id="KW-0067">ATP-binding</keyword>
<keyword id="KW-0963">Cytoplasm</keyword>
<keyword id="KW-0227">DNA damage</keyword>
<keyword id="KW-0228">DNA excision</keyword>
<keyword id="KW-0234">DNA repair</keyword>
<keyword id="KW-0267">Excision nuclease</keyword>
<keyword id="KW-0547">Nucleotide-binding</keyword>
<keyword id="KW-1185">Reference proteome</keyword>
<keyword id="KW-0742">SOS response</keyword>
<name>UVRB_CHLTR</name>
<comment type="function">
    <text evidence="1">The UvrABC repair system catalyzes the recognition and processing of DNA lesions. A damage recognition complex composed of 2 UvrA and 2 UvrB subunits scans DNA for abnormalities. Upon binding of the UvrA(2)B(2) complex to a putative damaged site, the DNA wraps around one UvrB monomer. DNA wrap is dependent on ATP binding by UvrB and probably causes local melting of the DNA helix, facilitating insertion of UvrB beta-hairpin between the DNA strands. Then UvrB probes one DNA strand for the presence of a lesion. If a lesion is found the UvrA subunits dissociate and the UvrB-DNA preincision complex is formed. This complex is subsequently bound by UvrC and the second UvrB is released. If no lesion is found, the DNA wraps around the other UvrB subunit that will check the other stand for damage.</text>
</comment>
<comment type="subunit">
    <text evidence="1">Forms a heterotetramer with UvrA during the search for lesions. Interacts with UvrC in an incision complex.</text>
</comment>
<comment type="subcellular location">
    <subcellularLocation>
        <location evidence="1">Cytoplasm</location>
    </subcellularLocation>
</comment>
<comment type="domain">
    <text evidence="1">The beta-hairpin motif is involved in DNA binding.</text>
</comment>
<comment type="similarity">
    <text evidence="1">Belongs to the UvrB family.</text>
</comment>